<proteinExistence type="evidence at protein level"/>
<reference key="1">
    <citation type="journal article" date="1976" name="Biochem. J.">
        <title>Amino acid sequence of cytochrome c from Tetrahymena pyriformis Phenoset A.</title>
        <authorList>
            <person name="Tarr G.E."/>
            <person name="Fitch W.M."/>
        </authorList>
    </citation>
    <scope>PROTEIN SEQUENCE</scope>
    <source>
        <strain>GL-7 of Phenoset A</strain>
    </source>
</reference>
<evidence type="ECO:0000255" key="1">
    <source>
        <dbReference type="PROSITE-ProRule" id="PRU00433"/>
    </source>
</evidence>
<evidence type="ECO:0000269" key="2">
    <source>
    </source>
</evidence>
<evidence type="ECO:0000305" key="3"/>
<sequence length="109" mass="11475">GPKEPEVTVPEGDASAGRDIFDSQCSACHAIEGDSTAAPVLGGVIGRKAGQEKFAYSKGMKGSGITWNEKHLFVFLKNPSKHVPGTKMAFAGLPADKDRADLIAYLKSV</sequence>
<organism>
    <name type="scientific">Tetrahymena pyriformis</name>
    <dbReference type="NCBI Taxonomy" id="5908"/>
    <lineage>
        <taxon>Eukaryota</taxon>
        <taxon>Sar</taxon>
        <taxon>Alveolata</taxon>
        <taxon>Ciliophora</taxon>
        <taxon>Intramacronucleata</taxon>
        <taxon>Oligohymenophorea</taxon>
        <taxon>Hymenostomatida</taxon>
        <taxon>Tetrahymenina</taxon>
        <taxon>Tetrahymenidae</taxon>
        <taxon>Tetrahymena</taxon>
    </lineage>
</organism>
<name>CYC_TETPY</name>
<comment type="function">
    <text>Electron carrier protein. The oxidized form of the cytochrome c heme group can accept an electron from the heme group of the cytochrome c1 subunit of cytochrome reductase. Cytochrome c then transfers this electron to the cytochrome oxidase complex, the final protein carrier in the mitochondrial electron-transport chain.</text>
</comment>
<comment type="subcellular location">
    <subcellularLocation>
        <location>Mitochondrion intermembrane space</location>
    </subcellularLocation>
    <text>Loosely associated with the inner membrane.</text>
</comment>
<comment type="PTM">
    <text>Binds 1 heme c group covalently per subunit.</text>
</comment>
<comment type="similarity">
    <text evidence="3">Belongs to the cytochrome c family.</text>
</comment>
<comment type="online information" name="Protein Spotlight">
    <link uri="https://www.proteinspotlight.org/back_issues/076"/>
    <text>Life shuttle - Issue 76 of November 2006</text>
</comment>
<keyword id="KW-0903">Direct protein sequencing</keyword>
<keyword id="KW-0249">Electron transport</keyword>
<keyword id="KW-0349">Heme</keyword>
<keyword id="KW-0408">Iron</keyword>
<keyword id="KW-0479">Metal-binding</keyword>
<keyword id="KW-0496">Mitochondrion</keyword>
<keyword id="KW-0679">Respiratory chain</keyword>
<keyword id="KW-0813">Transport</keyword>
<accession>P00079</accession>
<feature type="chain" id="PRO_0000108279" description="Cytochrome c">
    <location>
        <begin position="1"/>
        <end position="109"/>
    </location>
</feature>
<feature type="binding site" description="covalent" evidence="1 2">
    <location>
        <position position="25"/>
    </location>
    <ligand>
        <name>heme c</name>
        <dbReference type="ChEBI" id="CHEBI:61717"/>
    </ligand>
</feature>
<feature type="binding site" description="covalent" evidence="1 2">
    <location>
        <position position="28"/>
    </location>
    <ligand>
        <name>heme c</name>
        <dbReference type="ChEBI" id="CHEBI:61717"/>
    </ligand>
</feature>
<feature type="binding site" description="axial binding residue">
    <location>
        <position position="29"/>
    </location>
    <ligand>
        <name>heme c</name>
        <dbReference type="ChEBI" id="CHEBI:61717"/>
    </ligand>
    <ligandPart>
        <name>Fe</name>
        <dbReference type="ChEBI" id="CHEBI:18248"/>
    </ligandPart>
</feature>
<feature type="binding site" description="axial binding residue">
    <location>
        <position position="88"/>
    </location>
    <ligand>
        <name>heme c</name>
        <dbReference type="ChEBI" id="CHEBI:61717"/>
    </ligand>
    <ligandPart>
        <name>Fe</name>
        <dbReference type="ChEBI" id="CHEBI:18248"/>
    </ligandPart>
</feature>
<protein>
    <recommendedName>
        <fullName>Cytochrome c</fullName>
    </recommendedName>
</protein>
<dbReference type="PIR" id="A00071">
    <property type="entry name" value="CCTE"/>
</dbReference>
<dbReference type="SMR" id="P00079"/>
<dbReference type="GO" id="GO:0005758">
    <property type="term" value="C:mitochondrial intermembrane space"/>
    <property type="evidence" value="ECO:0007669"/>
    <property type="project" value="UniProtKB-SubCell"/>
</dbReference>
<dbReference type="GO" id="GO:0009055">
    <property type="term" value="F:electron transfer activity"/>
    <property type="evidence" value="ECO:0007669"/>
    <property type="project" value="InterPro"/>
</dbReference>
<dbReference type="GO" id="GO:0020037">
    <property type="term" value="F:heme binding"/>
    <property type="evidence" value="ECO:0007669"/>
    <property type="project" value="InterPro"/>
</dbReference>
<dbReference type="GO" id="GO:0046872">
    <property type="term" value="F:metal ion binding"/>
    <property type="evidence" value="ECO:0007669"/>
    <property type="project" value="UniProtKB-KW"/>
</dbReference>
<dbReference type="Gene3D" id="1.10.760.10">
    <property type="entry name" value="Cytochrome c-like domain"/>
    <property type="match status" value="1"/>
</dbReference>
<dbReference type="InterPro" id="IPR009056">
    <property type="entry name" value="Cyt_c-like_dom"/>
</dbReference>
<dbReference type="InterPro" id="IPR036909">
    <property type="entry name" value="Cyt_c-like_dom_sf"/>
</dbReference>
<dbReference type="InterPro" id="IPR002327">
    <property type="entry name" value="Cyt_c_1A/1B"/>
</dbReference>
<dbReference type="PANTHER" id="PTHR11961">
    <property type="entry name" value="CYTOCHROME C"/>
    <property type="match status" value="1"/>
</dbReference>
<dbReference type="Pfam" id="PF00034">
    <property type="entry name" value="Cytochrom_C"/>
    <property type="match status" value="1"/>
</dbReference>
<dbReference type="PRINTS" id="PR00604">
    <property type="entry name" value="CYTCHRMECIAB"/>
</dbReference>
<dbReference type="SUPFAM" id="SSF46626">
    <property type="entry name" value="Cytochrome c"/>
    <property type="match status" value="1"/>
</dbReference>
<dbReference type="PROSITE" id="PS51007">
    <property type="entry name" value="CYTC"/>
    <property type="match status" value="1"/>
</dbReference>